<organism>
    <name type="scientific">Arabidopsis thaliana</name>
    <name type="common">Mouse-ear cress</name>
    <dbReference type="NCBI Taxonomy" id="3702"/>
    <lineage>
        <taxon>Eukaryota</taxon>
        <taxon>Viridiplantae</taxon>
        <taxon>Streptophyta</taxon>
        <taxon>Embryophyta</taxon>
        <taxon>Tracheophyta</taxon>
        <taxon>Spermatophyta</taxon>
        <taxon>Magnoliopsida</taxon>
        <taxon>eudicotyledons</taxon>
        <taxon>Gunneridae</taxon>
        <taxon>Pentapetalae</taxon>
        <taxon>rosids</taxon>
        <taxon>malvids</taxon>
        <taxon>Brassicales</taxon>
        <taxon>Brassicaceae</taxon>
        <taxon>Camelineae</taxon>
        <taxon>Arabidopsis</taxon>
    </lineage>
</organism>
<proteinExistence type="evidence at transcript level"/>
<reference key="1">
    <citation type="journal article" date="2009" name="Plant Cell">
        <title>Nuclear activity of ROXY1, a glutaredoxin interacting with TGA factors, is required for petal development in Arabidopsis thaliana.</title>
        <authorList>
            <person name="Li S."/>
            <person name="Lauri A."/>
            <person name="Ziemann M."/>
            <person name="Busch A."/>
            <person name="Bhave M."/>
            <person name="Zachgo S."/>
        </authorList>
    </citation>
    <scope>NUCLEOTIDE SEQUENCE [MRNA]</scope>
    <scope>GENE FAMILY</scope>
</reference>
<reference key="2">
    <citation type="journal article" date="1999" name="Nature">
        <title>Sequence and analysis of chromosome 4 of the plant Arabidopsis thaliana.</title>
        <authorList>
            <person name="Mayer K.F.X."/>
            <person name="Schueller C."/>
            <person name="Wambutt R."/>
            <person name="Murphy G."/>
            <person name="Volckaert G."/>
            <person name="Pohl T."/>
            <person name="Duesterhoeft A."/>
            <person name="Stiekema W."/>
            <person name="Entian K.-D."/>
            <person name="Terryn N."/>
            <person name="Harris B."/>
            <person name="Ansorge W."/>
            <person name="Brandt P."/>
            <person name="Grivell L.A."/>
            <person name="Rieger M."/>
            <person name="Weichselgartner M."/>
            <person name="de Simone V."/>
            <person name="Obermaier B."/>
            <person name="Mache R."/>
            <person name="Mueller M."/>
            <person name="Kreis M."/>
            <person name="Delseny M."/>
            <person name="Puigdomenech P."/>
            <person name="Watson M."/>
            <person name="Schmidtheini T."/>
            <person name="Reichert B."/>
            <person name="Portetelle D."/>
            <person name="Perez-Alonso M."/>
            <person name="Boutry M."/>
            <person name="Bancroft I."/>
            <person name="Vos P."/>
            <person name="Hoheisel J."/>
            <person name="Zimmermann W."/>
            <person name="Wedler H."/>
            <person name="Ridley P."/>
            <person name="Langham S.-A."/>
            <person name="McCullagh B."/>
            <person name="Bilham L."/>
            <person name="Robben J."/>
            <person name="van der Schueren J."/>
            <person name="Grymonprez B."/>
            <person name="Chuang Y.-J."/>
            <person name="Vandenbussche F."/>
            <person name="Braeken M."/>
            <person name="Weltjens I."/>
            <person name="Voet M."/>
            <person name="Bastiaens I."/>
            <person name="Aert R."/>
            <person name="Defoor E."/>
            <person name="Weitzenegger T."/>
            <person name="Bothe G."/>
            <person name="Ramsperger U."/>
            <person name="Hilbert H."/>
            <person name="Braun M."/>
            <person name="Holzer E."/>
            <person name="Brandt A."/>
            <person name="Peters S."/>
            <person name="van Staveren M."/>
            <person name="Dirkse W."/>
            <person name="Mooijman P."/>
            <person name="Klein Lankhorst R."/>
            <person name="Rose M."/>
            <person name="Hauf J."/>
            <person name="Koetter P."/>
            <person name="Berneiser S."/>
            <person name="Hempel S."/>
            <person name="Feldpausch M."/>
            <person name="Lamberth S."/>
            <person name="Van den Daele H."/>
            <person name="De Keyser A."/>
            <person name="Buysshaert C."/>
            <person name="Gielen J."/>
            <person name="Villarroel R."/>
            <person name="De Clercq R."/>
            <person name="van Montagu M."/>
            <person name="Rogers J."/>
            <person name="Cronin A."/>
            <person name="Quail M.A."/>
            <person name="Bray-Allen S."/>
            <person name="Clark L."/>
            <person name="Doggett J."/>
            <person name="Hall S."/>
            <person name="Kay M."/>
            <person name="Lennard N."/>
            <person name="McLay K."/>
            <person name="Mayes R."/>
            <person name="Pettett A."/>
            <person name="Rajandream M.A."/>
            <person name="Lyne M."/>
            <person name="Benes V."/>
            <person name="Rechmann S."/>
            <person name="Borkova D."/>
            <person name="Bloecker H."/>
            <person name="Scharfe M."/>
            <person name="Grimm M."/>
            <person name="Loehnert T.-H."/>
            <person name="Dose S."/>
            <person name="de Haan M."/>
            <person name="Maarse A.C."/>
            <person name="Schaefer M."/>
            <person name="Mueller-Auer S."/>
            <person name="Gabel C."/>
            <person name="Fuchs M."/>
            <person name="Fartmann B."/>
            <person name="Granderath K."/>
            <person name="Dauner D."/>
            <person name="Herzl A."/>
            <person name="Neumann S."/>
            <person name="Argiriou A."/>
            <person name="Vitale D."/>
            <person name="Liguori R."/>
            <person name="Piravandi E."/>
            <person name="Massenet O."/>
            <person name="Quigley F."/>
            <person name="Clabauld G."/>
            <person name="Muendlein A."/>
            <person name="Felber R."/>
            <person name="Schnabl S."/>
            <person name="Hiller R."/>
            <person name="Schmidt W."/>
            <person name="Lecharny A."/>
            <person name="Aubourg S."/>
            <person name="Chefdor F."/>
            <person name="Cooke R."/>
            <person name="Berger C."/>
            <person name="Monfort A."/>
            <person name="Casacuberta E."/>
            <person name="Gibbons T."/>
            <person name="Weber N."/>
            <person name="Vandenbol M."/>
            <person name="Bargues M."/>
            <person name="Terol J."/>
            <person name="Torres A."/>
            <person name="Perez-Perez A."/>
            <person name="Purnelle B."/>
            <person name="Bent E."/>
            <person name="Johnson S."/>
            <person name="Tacon D."/>
            <person name="Jesse T."/>
            <person name="Heijnen L."/>
            <person name="Schwarz S."/>
            <person name="Scholler P."/>
            <person name="Heber S."/>
            <person name="Francs P."/>
            <person name="Bielke C."/>
            <person name="Frishman D."/>
            <person name="Haase D."/>
            <person name="Lemcke K."/>
            <person name="Mewes H.-W."/>
            <person name="Stocker S."/>
            <person name="Zaccaria P."/>
            <person name="Bevan M."/>
            <person name="Wilson R.K."/>
            <person name="de la Bastide M."/>
            <person name="Habermann K."/>
            <person name="Parnell L."/>
            <person name="Dedhia N."/>
            <person name="Gnoj L."/>
            <person name="Schutz K."/>
            <person name="Huang E."/>
            <person name="Spiegel L."/>
            <person name="Sekhon M."/>
            <person name="Murray J."/>
            <person name="Sheet P."/>
            <person name="Cordes M."/>
            <person name="Abu-Threideh J."/>
            <person name="Stoneking T."/>
            <person name="Kalicki J."/>
            <person name="Graves T."/>
            <person name="Harmon G."/>
            <person name="Edwards J."/>
            <person name="Latreille P."/>
            <person name="Courtney L."/>
            <person name="Cloud J."/>
            <person name="Abbott A."/>
            <person name="Scott K."/>
            <person name="Johnson D."/>
            <person name="Minx P."/>
            <person name="Bentley D."/>
            <person name="Fulton B."/>
            <person name="Miller N."/>
            <person name="Greco T."/>
            <person name="Kemp K."/>
            <person name="Kramer J."/>
            <person name="Fulton L."/>
            <person name="Mardis E."/>
            <person name="Dante M."/>
            <person name="Pepin K."/>
            <person name="Hillier L.W."/>
            <person name="Nelson J."/>
            <person name="Spieth J."/>
            <person name="Ryan E."/>
            <person name="Andrews S."/>
            <person name="Geisel C."/>
            <person name="Layman D."/>
            <person name="Du H."/>
            <person name="Ali J."/>
            <person name="Berghoff A."/>
            <person name="Jones K."/>
            <person name="Drone K."/>
            <person name="Cotton M."/>
            <person name="Joshu C."/>
            <person name="Antonoiu B."/>
            <person name="Zidanic M."/>
            <person name="Strong C."/>
            <person name="Sun H."/>
            <person name="Lamar B."/>
            <person name="Yordan C."/>
            <person name="Ma P."/>
            <person name="Zhong J."/>
            <person name="Preston R."/>
            <person name="Vil D."/>
            <person name="Shekher M."/>
            <person name="Matero A."/>
            <person name="Shah R."/>
            <person name="Swaby I.K."/>
            <person name="O'Shaughnessy A."/>
            <person name="Rodriguez M."/>
            <person name="Hoffman J."/>
            <person name="Till S."/>
            <person name="Granat S."/>
            <person name="Shohdy N."/>
            <person name="Hasegawa A."/>
            <person name="Hameed A."/>
            <person name="Lodhi M."/>
            <person name="Johnson A."/>
            <person name="Chen E."/>
            <person name="Marra M.A."/>
            <person name="Martienssen R."/>
            <person name="McCombie W.R."/>
        </authorList>
    </citation>
    <scope>NUCLEOTIDE SEQUENCE [LARGE SCALE GENOMIC DNA]</scope>
    <source>
        <strain>cv. Columbia</strain>
    </source>
</reference>
<reference key="3">
    <citation type="journal article" date="2017" name="Plant J.">
        <title>Araport11: a complete reannotation of the Arabidopsis thaliana reference genome.</title>
        <authorList>
            <person name="Cheng C.Y."/>
            <person name="Krishnakumar V."/>
            <person name="Chan A.P."/>
            <person name="Thibaud-Nissen F."/>
            <person name="Schobel S."/>
            <person name="Town C.D."/>
        </authorList>
    </citation>
    <scope>GENOME REANNOTATION</scope>
    <source>
        <strain>cv. Columbia</strain>
    </source>
</reference>
<reference key="4">
    <citation type="journal article" date="2003" name="Science">
        <title>Empirical analysis of transcriptional activity in the Arabidopsis genome.</title>
        <authorList>
            <person name="Yamada K."/>
            <person name="Lim J."/>
            <person name="Dale J.M."/>
            <person name="Chen H."/>
            <person name="Shinn P."/>
            <person name="Palm C.J."/>
            <person name="Southwick A.M."/>
            <person name="Wu H.C."/>
            <person name="Kim C.J."/>
            <person name="Nguyen M."/>
            <person name="Pham P.K."/>
            <person name="Cheuk R.F."/>
            <person name="Karlin-Newmann G."/>
            <person name="Liu S.X."/>
            <person name="Lam B."/>
            <person name="Sakano H."/>
            <person name="Wu T."/>
            <person name="Yu G."/>
            <person name="Miranda M."/>
            <person name="Quach H.L."/>
            <person name="Tripp M."/>
            <person name="Chang C.H."/>
            <person name="Lee J.M."/>
            <person name="Toriumi M.J."/>
            <person name="Chan M.M."/>
            <person name="Tang C.C."/>
            <person name="Onodera C.S."/>
            <person name="Deng J.M."/>
            <person name="Akiyama K."/>
            <person name="Ansari Y."/>
            <person name="Arakawa T."/>
            <person name="Banh J."/>
            <person name="Banno F."/>
            <person name="Bowser L."/>
            <person name="Brooks S.Y."/>
            <person name="Carninci P."/>
            <person name="Chao Q."/>
            <person name="Choy N."/>
            <person name="Enju A."/>
            <person name="Goldsmith A.D."/>
            <person name="Gurjal M."/>
            <person name="Hansen N.F."/>
            <person name="Hayashizaki Y."/>
            <person name="Johnson-Hopson C."/>
            <person name="Hsuan V.W."/>
            <person name="Iida K."/>
            <person name="Karnes M."/>
            <person name="Khan S."/>
            <person name="Koesema E."/>
            <person name="Ishida J."/>
            <person name="Jiang P.X."/>
            <person name="Jones T."/>
            <person name="Kawai J."/>
            <person name="Kamiya A."/>
            <person name="Meyers C."/>
            <person name="Nakajima M."/>
            <person name="Narusaka M."/>
            <person name="Seki M."/>
            <person name="Sakurai T."/>
            <person name="Satou M."/>
            <person name="Tamse R."/>
            <person name="Vaysberg M."/>
            <person name="Wallender E.K."/>
            <person name="Wong C."/>
            <person name="Yamamura Y."/>
            <person name="Yuan S."/>
            <person name="Shinozaki K."/>
            <person name="Davis R.W."/>
            <person name="Theologis A."/>
            <person name="Ecker J.R."/>
        </authorList>
    </citation>
    <scope>NUCLEOTIDE SEQUENCE [LARGE SCALE MRNA]</scope>
    <source>
        <strain>cv. Columbia</strain>
    </source>
</reference>
<reference key="5">
    <citation type="submission" date="2002-03" db="EMBL/GenBank/DDBJ databases">
        <title>Full-length cDNA from Arabidopsis thaliana.</title>
        <authorList>
            <person name="Brover V.V."/>
            <person name="Troukhan M.E."/>
            <person name="Alexandrov N.A."/>
            <person name="Lu Y.-P."/>
            <person name="Flavell R.B."/>
            <person name="Feldmann K.A."/>
        </authorList>
    </citation>
    <scope>NUCLEOTIDE SEQUENCE [LARGE SCALE MRNA]</scope>
</reference>
<reference key="6">
    <citation type="journal article" date="2004" name="Cell. Mol. Life Sci.">
        <title>Plant glutaredoxins: still mysterious reducing systems.</title>
        <authorList>
            <person name="Rouhier N."/>
            <person name="Gelhaye E."/>
            <person name="Jacquot J.-P."/>
        </authorList>
    </citation>
    <scope>GENE FAMILY</scope>
    <scope>NOMENCLATURE</scope>
</reference>
<reference key="7">
    <citation type="journal article" date="2006" name="J. Exp. Bot.">
        <title>Genome-wide analysis of plant glutaredoxin systems.</title>
        <authorList>
            <person name="Rouhier N."/>
            <person name="Couturier J."/>
            <person name="Jacquot J.-P."/>
        </authorList>
    </citation>
    <scope>GENE FAMILY</scope>
</reference>
<feature type="chain" id="PRO_0000268713" description="Glutaredoxin-C6">
    <location>
        <begin position="1"/>
        <end position="144"/>
    </location>
</feature>
<feature type="domain" description="Glutaredoxin" evidence="2">
    <location>
        <begin position="39"/>
        <end position="143"/>
    </location>
</feature>
<feature type="disulfide bond" description="Redox-active" evidence="1">
    <location>
        <begin position="59"/>
        <end position="62"/>
    </location>
</feature>
<gene>
    <name type="primary">GRXC6</name>
    <name type="synonym">ROXY21</name>
    <name type="ordered locus">At4g33040</name>
    <name type="ORF">F26P21.160</name>
</gene>
<dbReference type="EMBL" id="FJ611920">
    <property type="protein sequence ID" value="ACO50425.1"/>
    <property type="molecule type" value="mRNA"/>
</dbReference>
<dbReference type="EMBL" id="AL031804">
    <property type="protein sequence ID" value="CAA21213.1"/>
    <property type="molecule type" value="Genomic_DNA"/>
</dbReference>
<dbReference type="EMBL" id="AL161582">
    <property type="protein sequence ID" value="CAB80021.1"/>
    <property type="molecule type" value="Genomic_DNA"/>
</dbReference>
<dbReference type="EMBL" id="CP002687">
    <property type="protein sequence ID" value="AEE86163.1"/>
    <property type="molecule type" value="Genomic_DNA"/>
</dbReference>
<dbReference type="EMBL" id="AY074290">
    <property type="protein sequence ID" value="AAL66987.1"/>
    <property type="molecule type" value="mRNA"/>
</dbReference>
<dbReference type="EMBL" id="AY091245">
    <property type="protein sequence ID" value="AAM14184.1"/>
    <property type="molecule type" value="mRNA"/>
</dbReference>
<dbReference type="EMBL" id="AY088260">
    <property type="protein sequence ID" value="AAM65800.1"/>
    <property type="status" value="ALT_INIT"/>
    <property type="molecule type" value="mRNA"/>
</dbReference>
<dbReference type="PIR" id="T05312">
    <property type="entry name" value="T05312"/>
</dbReference>
<dbReference type="RefSeq" id="NP_195030.1">
    <property type="nucleotide sequence ID" value="NM_119458.4"/>
</dbReference>
<dbReference type="SMR" id="Q8L9S3"/>
<dbReference type="BioGRID" id="14726">
    <property type="interactions" value="1"/>
</dbReference>
<dbReference type="FunCoup" id="Q8L9S3">
    <property type="interactions" value="35"/>
</dbReference>
<dbReference type="IntAct" id="Q8L9S3">
    <property type="interactions" value="1"/>
</dbReference>
<dbReference type="STRING" id="3702.Q8L9S3"/>
<dbReference type="PaxDb" id="3702-AT4G33040.1"/>
<dbReference type="ProteomicsDB" id="222252"/>
<dbReference type="EnsemblPlants" id="AT4G33040.1">
    <property type="protein sequence ID" value="AT4G33040.1"/>
    <property type="gene ID" value="AT4G33040"/>
</dbReference>
<dbReference type="GeneID" id="829441"/>
<dbReference type="Gramene" id="AT4G33040.1">
    <property type="protein sequence ID" value="AT4G33040.1"/>
    <property type="gene ID" value="AT4G33040"/>
</dbReference>
<dbReference type="KEGG" id="ath:AT4G33040"/>
<dbReference type="Araport" id="AT4G33040"/>
<dbReference type="TAIR" id="AT4G33040">
    <property type="gene designation" value="ROXY21"/>
</dbReference>
<dbReference type="eggNOG" id="KOG1752">
    <property type="taxonomic scope" value="Eukaryota"/>
</dbReference>
<dbReference type="HOGENOM" id="CLU_026126_6_2_1"/>
<dbReference type="InParanoid" id="Q8L9S3"/>
<dbReference type="OMA" id="FSRSACC"/>
<dbReference type="OrthoDB" id="418495at2759"/>
<dbReference type="PhylomeDB" id="Q8L9S3"/>
<dbReference type="PRO" id="PR:Q8L9S3"/>
<dbReference type="Proteomes" id="UP000006548">
    <property type="component" value="Chromosome 4"/>
</dbReference>
<dbReference type="ExpressionAtlas" id="Q8L9S3">
    <property type="expression patterns" value="baseline and differential"/>
</dbReference>
<dbReference type="GO" id="GO:0005737">
    <property type="term" value="C:cytoplasm"/>
    <property type="evidence" value="ECO:0007669"/>
    <property type="project" value="UniProtKB-SubCell"/>
</dbReference>
<dbReference type="CDD" id="cd03419">
    <property type="entry name" value="GRX_GRXh_1_2_like"/>
    <property type="match status" value="1"/>
</dbReference>
<dbReference type="Gene3D" id="3.40.30.10">
    <property type="entry name" value="Glutaredoxin"/>
    <property type="match status" value="1"/>
</dbReference>
<dbReference type="InterPro" id="IPR011905">
    <property type="entry name" value="GlrX-like_pln_2"/>
</dbReference>
<dbReference type="InterPro" id="IPR002109">
    <property type="entry name" value="Glutaredoxin"/>
</dbReference>
<dbReference type="InterPro" id="IPR036249">
    <property type="entry name" value="Thioredoxin-like_sf"/>
</dbReference>
<dbReference type="NCBIfam" id="TIGR02189">
    <property type="entry name" value="GlrX-like_plant"/>
    <property type="match status" value="1"/>
</dbReference>
<dbReference type="PANTHER" id="PTHR10168">
    <property type="entry name" value="GLUTAREDOXIN"/>
    <property type="match status" value="1"/>
</dbReference>
<dbReference type="Pfam" id="PF00462">
    <property type="entry name" value="Glutaredoxin"/>
    <property type="match status" value="1"/>
</dbReference>
<dbReference type="SUPFAM" id="SSF52833">
    <property type="entry name" value="Thioredoxin-like"/>
    <property type="match status" value="1"/>
</dbReference>
<dbReference type="PROSITE" id="PS51354">
    <property type="entry name" value="GLUTAREDOXIN_2"/>
    <property type="match status" value="1"/>
</dbReference>
<keyword id="KW-0963">Cytoplasm</keyword>
<keyword id="KW-1015">Disulfide bond</keyword>
<keyword id="KW-0249">Electron transport</keyword>
<keyword id="KW-0676">Redox-active center</keyword>
<keyword id="KW-1185">Reference proteome</keyword>
<keyword id="KW-0813">Transport</keyword>
<name>GRXC6_ARATH</name>
<comment type="function">
    <text evidence="1">Has a glutathione-disulfide oxidoreductase activity in the presence of NADPH and glutathione reductase. Reduces low molecular weight disulfides and proteins (By similarity).</text>
</comment>
<comment type="subcellular location">
    <subcellularLocation>
        <location evidence="1">Cytoplasm</location>
    </subcellularLocation>
</comment>
<comment type="similarity">
    <text evidence="3">Belongs to the glutaredoxin family. CC-type subfamily.</text>
</comment>
<comment type="sequence caution" evidence="3">
    <conflict type="erroneous initiation">
        <sequence resource="EMBL-CDS" id="AAM65800"/>
    </conflict>
</comment>
<accession>Q8L9S3</accession>
<accession>C1JGR1</accession>
<accession>O82644</accession>
<evidence type="ECO:0000250" key="1"/>
<evidence type="ECO:0000255" key="2">
    <source>
        <dbReference type="PROSITE-ProRule" id="PRU00686"/>
    </source>
</evidence>
<evidence type="ECO:0000305" key="3"/>
<sequence length="144" mass="15566">MMQELGLQRFSNDVVRLDLTPPSQTSSTSLSIDEEESTEAKIRRLISEHPVIIFSRSSCCMCHVMKRLLATIGVIPTVIELDDHEVSSLPTALQDEYSGGVSVVGPPPAVFIGRECVGGLESLVALHLSGQLVPKLVQVGALWV</sequence>
<protein>
    <recommendedName>
        <fullName>Glutaredoxin-C6</fullName>
        <shortName>AtGrxC6</shortName>
    </recommendedName>
    <alternativeName>
        <fullName>Protein ROXY 21</fullName>
    </alternativeName>
</protein>